<accession>B7N473</accession>
<evidence type="ECO:0000255" key="1">
    <source>
        <dbReference type="HAMAP-Rule" id="MF_00131"/>
    </source>
</evidence>
<feature type="chain" id="PRO_1000117739" description="Tryptophan synthase alpha chain">
    <location>
        <begin position="1"/>
        <end position="268"/>
    </location>
</feature>
<feature type="active site" description="Proton acceptor" evidence="1">
    <location>
        <position position="49"/>
    </location>
</feature>
<feature type="active site" description="Proton acceptor" evidence="1">
    <location>
        <position position="60"/>
    </location>
</feature>
<gene>
    <name evidence="1" type="primary">trpA</name>
    <name type="ordered locus">ECUMN_1559</name>
</gene>
<sequence>MERYESLFAQLKERKEGAFVPFVTLGDPGIEQSLKIIDTLIEAGADALELGIPFSDPLADGPTIQNATLRAFAAGVTPAQCFEMLALIRQKHPTIPIGLLMYANLVFSKGIDEFYAQCEKVGVDSVLVADVPVEESAPFRQAALRHNVAPIFICPPNADDDLLRQIASYGRGYTYLLSRAGVTGAENRAALPLNHLVTKLKEYNAAPPLQGFGISAPDQVKAAIDAGAAGAISGSAIVKIIEQHINEPEKMLVALKAFVQPMKAATRS</sequence>
<keyword id="KW-0028">Amino-acid biosynthesis</keyword>
<keyword id="KW-0057">Aromatic amino acid biosynthesis</keyword>
<keyword id="KW-0456">Lyase</keyword>
<keyword id="KW-0822">Tryptophan biosynthesis</keyword>
<protein>
    <recommendedName>
        <fullName evidence="1">Tryptophan synthase alpha chain</fullName>
        <ecNumber evidence="1">4.2.1.20</ecNumber>
    </recommendedName>
</protein>
<reference key="1">
    <citation type="journal article" date="2009" name="PLoS Genet.">
        <title>Organised genome dynamics in the Escherichia coli species results in highly diverse adaptive paths.</title>
        <authorList>
            <person name="Touchon M."/>
            <person name="Hoede C."/>
            <person name="Tenaillon O."/>
            <person name="Barbe V."/>
            <person name="Baeriswyl S."/>
            <person name="Bidet P."/>
            <person name="Bingen E."/>
            <person name="Bonacorsi S."/>
            <person name="Bouchier C."/>
            <person name="Bouvet O."/>
            <person name="Calteau A."/>
            <person name="Chiapello H."/>
            <person name="Clermont O."/>
            <person name="Cruveiller S."/>
            <person name="Danchin A."/>
            <person name="Diard M."/>
            <person name="Dossat C."/>
            <person name="Karoui M.E."/>
            <person name="Frapy E."/>
            <person name="Garry L."/>
            <person name="Ghigo J.M."/>
            <person name="Gilles A.M."/>
            <person name="Johnson J."/>
            <person name="Le Bouguenec C."/>
            <person name="Lescat M."/>
            <person name="Mangenot S."/>
            <person name="Martinez-Jehanne V."/>
            <person name="Matic I."/>
            <person name="Nassif X."/>
            <person name="Oztas S."/>
            <person name="Petit M.A."/>
            <person name="Pichon C."/>
            <person name="Rouy Z."/>
            <person name="Ruf C.S."/>
            <person name="Schneider D."/>
            <person name="Tourret J."/>
            <person name="Vacherie B."/>
            <person name="Vallenet D."/>
            <person name="Medigue C."/>
            <person name="Rocha E.P.C."/>
            <person name="Denamur E."/>
        </authorList>
    </citation>
    <scope>NUCLEOTIDE SEQUENCE [LARGE SCALE GENOMIC DNA]</scope>
    <source>
        <strain>UMN026 / ExPEC</strain>
    </source>
</reference>
<comment type="function">
    <text evidence="1">The alpha subunit is responsible for the aldol cleavage of indoleglycerol phosphate to indole and glyceraldehyde 3-phosphate.</text>
</comment>
<comment type="catalytic activity">
    <reaction evidence="1">
        <text>(1S,2R)-1-C-(indol-3-yl)glycerol 3-phosphate + L-serine = D-glyceraldehyde 3-phosphate + L-tryptophan + H2O</text>
        <dbReference type="Rhea" id="RHEA:10532"/>
        <dbReference type="ChEBI" id="CHEBI:15377"/>
        <dbReference type="ChEBI" id="CHEBI:33384"/>
        <dbReference type="ChEBI" id="CHEBI:57912"/>
        <dbReference type="ChEBI" id="CHEBI:58866"/>
        <dbReference type="ChEBI" id="CHEBI:59776"/>
        <dbReference type="EC" id="4.2.1.20"/>
    </reaction>
</comment>
<comment type="pathway">
    <text evidence="1">Amino-acid biosynthesis; L-tryptophan biosynthesis; L-tryptophan from chorismate: step 5/5.</text>
</comment>
<comment type="subunit">
    <text evidence="1">Tetramer of two alpha and two beta chains.</text>
</comment>
<comment type="similarity">
    <text evidence="1">Belongs to the TrpA family.</text>
</comment>
<organism>
    <name type="scientific">Escherichia coli O17:K52:H18 (strain UMN026 / ExPEC)</name>
    <dbReference type="NCBI Taxonomy" id="585056"/>
    <lineage>
        <taxon>Bacteria</taxon>
        <taxon>Pseudomonadati</taxon>
        <taxon>Pseudomonadota</taxon>
        <taxon>Gammaproteobacteria</taxon>
        <taxon>Enterobacterales</taxon>
        <taxon>Enterobacteriaceae</taxon>
        <taxon>Escherichia</taxon>
    </lineage>
</organism>
<dbReference type="EC" id="4.2.1.20" evidence="1"/>
<dbReference type="EMBL" id="CU928163">
    <property type="protein sequence ID" value="CAR12766.1"/>
    <property type="molecule type" value="Genomic_DNA"/>
</dbReference>
<dbReference type="RefSeq" id="WP_000443081.1">
    <property type="nucleotide sequence ID" value="NC_011751.1"/>
</dbReference>
<dbReference type="RefSeq" id="YP_002412302.1">
    <property type="nucleotide sequence ID" value="NC_011751.1"/>
</dbReference>
<dbReference type="SMR" id="B7N473"/>
<dbReference type="STRING" id="585056.ECUMN_1559"/>
<dbReference type="KEGG" id="eum:ECUMN_1559"/>
<dbReference type="PATRIC" id="fig|585056.7.peg.1755"/>
<dbReference type="HOGENOM" id="CLU_016734_0_4_6"/>
<dbReference type="UniPathway" id="UPA00035">
    <property type="reaction ID" value="UER00044"/>
</dbReference>
<dbReference type="Proteomes" id="UP000007097">
    <property type="component" value="Chromosome"/>
</dbReference>
<dbReference type="GO" id="GO:0005829">
    <property type="term" value="C:cytosol"/>
    <property type="evidence" value="ECO:0007669"/>
    <property type="project" value="TreeGrafter"/>
</dbReference>
<dbReference type="GO" id="GO:0004834">
    <property type="term" value="F:tryptophan synthase activity"/>
    <property type="evidence" value="ECO:0007669"/>
    <property type="project" value="UniProtKB-UniRule"/>
</dbReference>
<dbReference type="CDD" id="cd04724">
    <property type="entry name" value="Tryptophan_synthase_alpha"/>
    <property type="match status" value="1"/>
</dbReference>
<dbReference type="FunFam" id="3.20.20.70:FF:000037">
    <property type="entry name" value="Tryptophan synthase alpha chain"/>
    <property type="match status" value="1"/>
</dbReference>
<dbReference type="Gene3D" id="3.20.20.70">
    <property type="entry name" value="Aldolase class I"/>
    <property type="match status" value="1"/>
</dbReference>
<dbReference type="HAMAP" id="MF_00131">
    <property type="entry name" value="Trp_synth_alpha"/>
    <property type="match status" value="1"/>
</dbReference>
<dbReference type="InterPro" id="IPR013785">
    <property type="entry name" value="Aldolase_TIM"/>
</dbReference>
<dbReference type="InterPro" id="IPR011060">
    <property type="entry name" value="RibuloseP-bd_barrel"/>
</dbReference>
<dbReference type="InterPro" id="IPR018204">
    <property type="entry name" value="Trp_synthase_alpha_AS"/>
</dbReference>
<dbReference type="InterPro" id="IPR002028">
    <property type="entry name" value="Trp_synthase_suA"/>
</dbReference>
<dbReference type="NCBIfam" id="TIGR00262">
    <property type="entry name" value="trpA"/>
    <property type="match status" value="1"/>
</dbReference>
<dbReference type="PANTHER" id="PTHR43406:SF1">
    <property type="entry name" value="TRYPTOPHAN SYNTHASE ALPHA CHAIN, CHLOROPLASTIC"/>
    <property type="match status" value="1"/>
</dbReference>
<dbReference type="PANTHER" id="PTHR43406">
    <property type="entry name" value="TRYPTOPHAN SYNTHASE, ALPHA CHAIN"/>
    <property type="match status" value="1"/>
</dbReference>
<dbReference type="Pfam" id="PF00290">
    <property type="entry name" value="Trp_syntA"/>
    <property type="match status" value="1"/>
</dbReference>
<dbReference type="SUPFAM" id="SSF51366">
    <property type="entry name" value="Ribulose-phoshate binding barrel"/>
    <property type="match status" value="1"/>
</dbReference>
<dbReference type="PROSITE" id="PS00167">
    <property type="entry name" value="TRP_SYNTHASE_ALPHA"/>
    <property type="match status" value="1"/>
</dbReference>
<name>TRPA_ECOLU</name>
<proteinExistence type="inferred from homology"/>